<keyword id="KW-0025">Alternative splicing</keyword>
<keyword id="KW-0067">ATP-binding</keyword>
<keyword id="KW-0158">Chromosome</keyword>
<keyword id="KW-0175">Coiled coil</keyword>
<keyword id="KW-0227">DNA damage</keyword>
<keyword id="KW-0233">DNA recombination</keyword>
<keyword id="KW-0234">DNA repair</keyword>
<keyword id="KW-1017">Isopeptide bond</keyword>
<keyword id="KW-0547">Nucleotide-binding</keyword>
<keyword id="KW-0539">Nucleus</keyword>
<keyword id="KW-0597">Phosphoprotein</keyword>
<keyword id="KW-1267">Proteomics identification</keyword>
<keyword id="KW-1185">Reference proteome</keyword>
<keyword id="KW-0779">Telomere</keyword>
<keyword id="KW-0832">Ubl conjugation</keyword>
<comment type="function">
    <text evidence="10 12 15">Core component of the SMC5-SMC6 complex, a complex involved in DNA double-strand breaks by homologous recombination. The complex may promote sister chromatid homologous recombination by recruiting the SMC1-SMC3 cohesin complex to double-strand breaks. The complex is required for telomere maintenance via recombination in ALT (alternative lengthening of telomeres) cell lines and mediates sumoylation of shelterin complex (telosome) components which is proposed to lead to shelterin complex disassembly in ALT-associated PML bodies (APBs). Required for recruitment of telomeres to PML nuclear bodies. SMC5-SMC6 complex may prevent transcription of episomal DNA, such as circular viral DNA genome (PubMed:26983541).</text>
</comment>
<comment type="subunit">
    <text evidence="5 6 9 13 14 18">Forms a heterodimer with SMC5 (PubMed:11408570). Component of the SMC5-SMC6 complex which consists at least of SMC5, SMC6, NSMCE2, NSMCE1, NSMCE4A or EID3 and NSMCE3 (PubMed:18086888). Interacts with NSMCE1 (PubMed:14701739). Interacts with NSMCE2 (PubMed:16055714). Interacts with SLF1 (PubMed:25931565). Interacts with SLF2 (PubMed:25931565). Interacts with RAD18 (PubMed:25931565). Interacts with SIMC1 (PubMed:36373674).</text>
</comment>
<comment type="subunit">
    <text evidence="15">(Microbial infection) SMC5-SMC6 complex interacts with Hepatitis B X protein.</text>
</comment>
<comment type="subunit">
    <text evidence="17">(Microbial infection) Interacts with human herpesvirus 8 (KSHV) protein RTA/ORF50; this interaction targets the SMC5-SMC6 complex for proteasomal degradation.</text>
</comment>
<comment type="subunit">
    <text evidence="16">(Microbial infection) Interacts with Epstein-Barr virus BNRF1; this interaction targets SMC5-SMC6 complex for proteasomal degradation.</text>
</comment>
<comment type="interaction">
    <interactant intactId="EBI-605415">
        <id>Q96SB8</id>
    </interactant>
    <interactant intactId="EBI-2557372">
        <id>Q8WV22</id>
        <label>NSMCE1</label>
    </interactant>
    <organismsDiffer>false</organismsDiffer>
    <experiments>11</experiments>
</comment>
<comment type="interaction">
    <interactant intactId="EBI-605415">
        <id>Q96SB8</id>
    </interactant>
    <interactant intactId="EBI-2557388">
        <id>Q96MF7</id>
        <label>NSMCE2</label>
    </interactant>
    <organismsDiffer>false</organismsDiffer>
    <experiments>4</experiments>
</comment>
<comment type="interaction">
    <interactant intactId="EBI-605415">
        <id>Q96SB8</id>
    </interactant>
    <interactant intactId="EBI-2557356">
        <id>Q96MG7</id>
        <label>NSMCE3</label>
    </interactant>
    <organismsDiffer>false</organismsDiffer>
    <experiments>7</experiments>
</comment>
<comment type="interaction">
    <interactant intactId="EBI-605415">
        <id>Q96SB8</id>
    </interactant>
    <interactant intactId="EBI-2682240">
        <id>Q8IX21</id>
        <label>SLF2</label>
    </interactant>
    <organismsDiffer>false</organismsDiffer>
    <experiments>6</experiments>
</comment>
<comment type="interaction">
    <interactant intactId="EBI-605415">
        <id>Q96SB8</id>
    </interactant>
    <interactant intactId="EBI-605405">
        <id>Q8IY18</id>
        <label>SMC5</label>
    </interactant>
    <organismsDiffer>false</organismsDiffer>
    <experiments>7</experiments>
</comment>
<comment type="subcellular location">
    <subcellularLocation>
        <location evidence="5 14 16 17">Nucleus</location>
    </subcellularLocation>
    <subcellularLocation>
        <location evidence="5">Nucleus speckle</location>
    </subcellularLocation>
    <subcellularLocation>
        <location evidence="2">Chromosome</location>
    </subcellularLocation>
    <subcellularLocation>
        <location evidence="12 18">Nucleus</location>
        <location evidence="12 18">PML body</location>
    </subcellularLocation>
    <subcellularLocation>
        <location evidence="12">Chromosome</location>
        <location evidence="12">Telomere</location>
    </subcellularLocation>
    <text evidence="2 5 12 14">Colocalizes with SMC5 on the X-Y chromosome pair within the sex vesicle during late pachytene/diplotene (By similarity). Localizes to PML nuclear bodies in ALT cell lines (PubMed:17589526). Associates with chromatin (PubMed:25931565). Accumulates with RAD18 and the SLF1-SLF2 complex at replication-coupled DNA interstrand repair and DNA double-strand breaks (DSBs) sites on chromatin in a ubiquitin-dependent manner (PubMed:25931565). Localizes in interchromatin granule clusters (PubMed:11408570).</text>
</comment>
<comment type="alternative products">
    <event type="alternative splicing"/>
    <isoform>
        <id>Q96SB8-1</id>
        <name>1</name>
        <sequence type="displayed"/>
    </isoform>
    <isoform>
        <id>Q96SB8-2</id>
        <name>2</name>
        <sequence type="described" ref="VSP_022253"/>
    </isoform>
</comment>
<comment type="tissue specificity">
    <text evidence="5">Widely expressed (PubMed:11408570). Strongly expressed in testis (PubMed:11408570).</text>
</comment>
<comment type="domain">
    <text evidence="1">The flexible hinge domain, which separates the large intramolecular coiled coil regions, allows the heterotypic interaction with the corresponding domain of SMC5, forming a V-shaped heterodimer.</text>
</comment>
<comment type="PTM">
    <text evidence="5">Phosphorylated.</text>
</comment>
<comment type="PTM">
    <text evidence="9 13">Sumoylated by NSMCE2/MMS21.</text>
</comment>
<comment type="PTM">
    <text evidence="13">Ubiquitinated.</text>
</comment>
<comment type="PTM">
    <text evidence="15">(Microbial infection) SMC5-SMC6 complex is degraded by the activity of Hepatitis B X protein.</text>
</comment>
<comment type="similarity">
    <text evidence="20">Belongs to the SMC family. SMC6 subfamily.</text>
</comment>
<comment type="sequence caution" evidence="20">
    <conflict type="miscellaneous discrepancy">
        <sequence resource="EMBL-CDS" id="AAH32675"/>
    </conflict>
    <text>Contaminating sequence. Potential poly-A sequence.</text>
</comment>
<comment type="sequence caution" evidence="20">
    <conflict type="frameshift">
        <sequence resource="EMBL-CDS" id="BAB15236"/>
    </conflict>
</comment>
<reference key="1">
    <citation type="journal article" date="2001" name="Mol. Biol. Cell">
        <title>Characterization of a novel human SMC heterodimer homologous to the Schizosaccharomyces pombe Rad18/Spr18 complex.</title>
        <authorList>
            <person name="Taylor E.M."/>
            <person name="Moghraby J.S."/>
            <person name="Lees J.H."/>
            <person name="Smit B."/>
            <person name="Moens P.B."/>
            <person name="Lehmann A.R."/>
        </authorList>
    </citation>
    <scope>NUCLEOTIDE SEQUENCE [MRNA] (ISOFORM 1)</scope>
    <scope>INTERACTION WITH SMC5</scope>
    <scope>SUBCELLULAR LOCATION</scope>
    <scope>TISSUE SPECIFICITY</scope>
    <scope>PHOSPHORYLATION</scope>
    <scope>VARIANTS GLY-464 AND THR-691</scope>
</reference>
<reference key="2">
    <citation type="journal article" date="2001" name="Genome Res.">
        <title>Towards a catalog of human genes and proteins: sequencing and analysis of 500 novel complete protein coding human cDNAs.</title>
        <authorList>
            <person name="Wiemann S."/>
            <person name="Weil B."/>
            <person name="Wellenreuther R."/>
            <person name="Gassenhuber J."/>
            <person name="Glassl S."/>
            <person name="Ansorge W."/>
            <person name="Boecher M."/>
            <person name="Bloecker H."/>
            <person name="Bauersachs S."/>
            <person name="Blum H."/>
            <person name="Lauber J."/>
            <person name="Duesterhoeft A."/>
            <person name="Beyer A."/>
            <person name="Koehrer K."/>
            <person name="Strack N."/>
            <person name="Mewes H.-W."/>
            <person name="Ottenwaelder B."/>
            <person name="Obermaier B."/>
            <person name="Tampe J."/>
            <person name="Heubner D."/>
            <person name="Wambutt R."/>
            <person name="Korn B."/>
            <person name="Klein M."/>
            <person name="Poustka A."/>
        </authorList>
    </citation>
    <scope>NUCLEOTIDE SEQUENCE [LARGE SCALE MRNA] (ISOFORM 1)</scope>
    <source>
        <tissue>Amygdala</tissue>
    </source>
</reference>
<reference key="3">
    <citation type="journal article" date="2004" name="Nat. Genet.">
        <title>Complete sequencing and characterization of 21,243 full-length human cDNAs.</title>
        <authorList>
            <person name="Ota T."/>
            <person name="Suzuki Y."/>
            <person name="Nishikawa T."/>
            <person name="Otsuki T."/>
            <person name="Sugiyama T."/>
            <person name="Irie R."/>
            <person name="Wakamatsu A."/>
            <person name="Hayashi K."/>
            <person name="Sato H."/>
            <person name="Nagai K."/>
            <person name="Kimura K."/>
            <person name="Makita H."/>
            <person name="Sekine M."/>
            <person name="Obayashi M."/>
            <person name="Nishi T."/>
            <person name="Shibahara T."/>
            <person name="Tanaka T."/>
            <person name="Ishii S."/>
            <person name="Yamamoto J."/>
            <person name="Saito K."/>
            <person name="Kawai Y."/>
            <person name="Isono Y."/>
            <person name="Nakamura Y."/>
            <person name="Nagahari K."/>
            <person name="Murakami K."/>
            <person name="Yasuda T."/>
            <person name="Iwayanagi T."/>
            <person name="Wagatsuma M."/>
            <person name="Shiratori A."/>
            <person name="Sudo H."/>
            <person name="Hosoiri T."/>
            <person name="Kaku Y."/>
            <person name="Kodaira H."/>
            <person name="Kondo H."/>
            <person name="Sugawara M."/>
            <person name="Takahashi M."/>
            <person name="Kanda K."/>
            <person name="Yokoi T."/>
            <person name="Furuya T."/>
            <person name="Kikkawa E."/>
            <person name="Omura Y."/>
            <person name="Abe K."/>
            <person name="Kamihara K."/>
            <person name="Katsuta N."/>
            <person name="Sato K."/>
            <person name="Tanikawa M."/>
            <person name="Yamazaki M."/>
            <person name="Ninomiya K."/>
            <person name="Ishibashi T."/>
            <person name="Yamashita H."/>
            <person name="Murakawa K."/>
            <person name="Fujimori K."/>
            <person name="Tanai H."/>
            <person name="Kimata M."/>
            <person name="Watanabe M."/>
            <person name="Hiraoka S."/>
            <person name="Chiba Y."/>
            <person name="Ishida S."/>
            <person name="Ono Y."/>
            <person name="Takiguchi S."/>
            <person name="Watanabe S."/>
            <person name="Yosida M."/>
            <person name="Hotuta T."/>
            <person name="Kusano J."/>
            <person name="Kanehori K."/>
            <person name="Takahashi-Fujii A."/>
            <person name="Hara H."/>
            <person name="Tanase T.-O."/>
            <person name="Nomura Y."/>
            <person name="Togiya S."/>
            <person name="Komai F."/>
            <person name="Hara R."/>
            <person name="Takeuchi K."/>
            <person name="Arita M."/>
            <person name="Imose N."/>
            <person name="Musashino K."/>
            <person name="Yuuki H."/>
            <person name="Oshima A."/>
            <person name="Sasaki N."/>
            <person name="Aotsuka S."/>
            <person name="Yoshikawa Y."/>
            <person name="Matsunawa H."/>
            <person name="Ichihara T."/>
            <person name="Shiohata N."/>
            <person name="Sano S."/>
            <person name="Moriya S."/>
            <person name="Momiyama H."/>
            <person name="Satoh N."/>
            <person name="Takami S."/>
            <person name="Terashima Y."/>
            <person name="Suzuki O."/>
            <person name="Nakagawa S."/>
            <person name="Senoh A."/>
            <person name="Mizoguchi H."/>
            <person name="Goto Y."/>
            <person name="Shimizu F."/>
            <person name="Wakebe H."/>
            <person name="Hishigaki H."/>
            <person name="Watanabe T."/>
            <person name="Sugiyama A."/>
            <person name="Takemoto M."/>
            <person name="Kawakami B."/>
            <person name="Yamazaki M."/>
            <person name="Watanabe K."/>
            <person name="Kumagai A."/>
            <person name="Itakura S."/>
            <person name="Fukuzumi Y."/>
            <person name="Fujimori Y."/>
            <person name="Komiyama M."/>
            <person name="Tashiro H."/>
            <person name="Tanigami A."/>
            <person name="Fujiwara T."/>
            <person name="Ono T."/>
            <person name="Yamada K."/>
            <person name="Fujii Y."/>
            <person name="Ozaki K."/>
            <person name="Hirao M."/>
            <person name="Ohmori Y."/>
            <person name="Kawabata A."/>
            <person name="Hikiji T."/>
            <person name="Kobatake N."/>
            <person name="Inagaki H."/>
            <person name="Ikema Y."/>
            <person name="Okamoto S."/>
            <person name="Okitani R."/>
            <person name="Kawakami T."/>
            <person name="Noguchi S."/>
            <person name="Itoh T."/>
            <person name="Shigeta K."/>
            <person name="Senba T."/>
            <person name="Matsumura K."/>
            <person name="Nakajima Y."/>
            <person name="Mizuno T."/>
            <person name="Morinaga M."/>
            <person name="Sasaki M."/>
            <person name="Togashi T."/>
            <person name="Oyama M."/>
            <person name="Hata H."/>
            <person name="Watanabe M."/>
            <person name="Komatsu T."/>
            <person name="Mizushima-Sugano J."/>
            <person name="Satoh T."/>
            <person name="Shirai Y."/>
            <person name="Takahashi Y."/>
            <person name="Nakagawa K."/>
            <person name="Okumura K."/>
            <person name="Nagase T."/>
            <person name="Nomura N."/>
            <person name="Kikuchi H."/>
            <person name="Masuho Y."/>
            <person name="Yamashita R."/>
            <person name="Nakai K."/>
            <person name="Yada T."/>
            <person name="Nakamura Y."/>
            <person name="Ohara O."/>
            <person name="Isogai T."/>
            <person name="Sugano S."/>
        </authorList>
    </citation>
    <scope>NUCLEOTIDE SEQUENCE [LARGE SCALE MRNA] (ISOFORM 1)</scope>
    <scope>NUCLEOTIDE SEQUENCE [LARGE SCALE MRNA] OF 467-1091</scope>
    <scope>VARIANT THR-691</scope>
    <source>
        <tissue>Testis</tissue>
    </source>
</reference>
<reference key="4">
    <citation type="journal article" date="2007" name="BMC Genomics">
        <title>The full-ORF clone resource of the German cDNA consortium.</title>
        <authorList>
            <person name="Bechtel S."/>
            <person name="Rosenfelder H."/>
            <person name="Duda A."/>
            <person name="Schmidt C.P."/>
            <person name="Ernst U."/>
            <person name="Wellenreuther R."/>
            <person name="Mehrle A."/>
            <person name="Schuster C."/>
            <person name="Bahr A."/>
            <person name="Bloecker H."/>
            <person name="Heubner D."/>
            <person name="Hoerlein A."/>
            <person name="Michel G."/>
            <person name="Wedler H."/>
            <person name="Koehrer K."/>
            <person name="Ottenwaelder B."/>
            <person name="Poustka A."/>
            <person name="Wiemann S."/>
            <person name="Schupp I."/>
        </authorList>
    </citation>
    <scope>NUCLEOTIDE SEQUENCE [LARGE SCALE MRNA] (ISOFORM 1)</scope>
    <source>
        <tissue>Stomach</tissue>
    </source>
</reference>
<reference key="5">
    <citation type="journal article" date="2005" name="Nature">
        <title>Generation and annotation of the DNA sequences of human chromosomes 2 and 4.</title>
        <authorList>
            <person name="Hillier L.W."/>
            <person name="Graves T.A."/>
            <person name="Fulton R.S."/>
            <person name="Fulton L.A."/>
            <person name="Pepin K.H."/>
            <person name="Minx P."/>
            <person name="Wagner-McPherson C."/>
            <person name="Layman D."/>
            <person name="Wylie K."/>
            <person name="Sekhon M."/>
            <person name="Becker M.C."/>
            <person name="Fewell G.A."/>
            <person name="Delehaunty K.D."/>
            <person name="Miner T.L."/>
            <person name="Nash W.E."/>
            <person name="Kremitzki C."/>
            <person name="Oddy L."/>
            <person name="Du H."/>
            <person name="Sun H."/>
            <person name="Bradshaw-Cordum H."/>
            <person name="Ali J."/>
            <person name="Carter J."/>
            <person name="Cordes M."/>
            <person name="Harris A."/>
            <person name="Isak A."/>
            <person name="van Brunt A."/>
            <person name="Nguyen C."/>
            <person name="Du F."/>
            <person name="Courtney L."/>
            <person name="Kalicki J."/>
            <person name="Ozersky P."/>
            <person name="Abbott S."/>
            <person name="Armstrong J."/>
            <person name="Belter E.A."/>
            <person name="Caruso L."/>
            <person name="Cedroni M."/>
            <person name="Cotton M."/>
            <person name="Davidson T."/>
            <person name="Desai A."/>
            <person name="Elliott G."/>
            <person name="Erb T."/>
            <person name="Fronick C."/>
            <person name="Gaige T."/>
            <person name="Haakenson W."/>
            <person name="Haglund K."/>
            <person name="Holmes A."/>
            <person name="Harkins R."/>
            <person name="Kim K."/>
            <person name="Kruchowski S.S."/>
            <person name="Strong C.M."/>
            <person name="Grewal N."/>
            <person name="Goyea E."/>
            <person name="Hou S."/>
            <person name="Levy A."/>
            <person name="Martinka S."/>
            <person name="Mead K."/>
            <person name="McLellan M.D."/>
            <person name="Meyer R."/>
            <person name="Randall-Maher J."/>
            <person name="Tomlinson C."/>
            <person name="Dauphin-Kohlberg S."/>
            <person name="Kozlowicz-Reilly A."/>
            <person name="Shah N."/>
            <person name="Swearengen-Shahid S."/>
            <person name="Snider J."/>
            <person name="Strong J.T."/>
            <person name="Thompson J."/>
            <person name="Yoakum M."/>
            <person name="Leonard S."/>
            <person name="Pearman C."/>
            <person name="Trani L."/>
            <person name="Radionenko M."/>
            <person name="Waligorski J.E."/>
            <person name="Wang C."/>
            <person name="Rock S.M."/>
            <person name="Tin-Wollam A.-M."/>
            <person name="Maupin R."/>
            <person name="Latreille P."/>
            <person name="Wendl M.C."/>
            <person name="Yang S.-P."/>
            <person name="Pohl C."/>
            <person name="Wallis J.W."/>
            <person name="Spieth J."/>
            <person name="Bieri T.A."/>
            <person name="Berkowicz N."/>
            <person name="Nelson J.O."/>
            <person name="Osborne J."/>
            <person name="Ding L."/>
            <person name="Meyer R."/>
            <person name="Sabo A."/>
            <person name="Shotland Y."/>
            <person name="Sinha P."/>
            <person name="Wohldmann P.E."/>
            <person name="Cook L.L."/>
            <person name="Hickenbotham M.T."/>
            <person name="Eldred J."/>
            <person name="Williams D."/>
            <person name="Jones T.A."/>
            <person name="She X."/>
            <person name="Ciccarelli F.D."/>
            <person name="Izaurralde E."/>
            <person name="Taylor J."/>
            <person name="Schmutz J."/>
            <person name="Myers R.M."/>
            <person name="Cox D.R."/>
            <person name="Huang X."/>
            <person name="McPherson J.D."/>
            <person name="Mardis E.R."/>
            <person name="Clifton S.W."/>
            <person name="Warren W.C."/>
            <person name="Chinwalla A.T."/>
            <person name="Eddy S.R."/>
            <person name="Marra M.A."/>
            <person name="Ovcharenko I."/>
            <person name="Furey T.S."/>
            <person name="Miller W."/>
            <person name="Eichler E.E."/>
            <person name="Bork P."/>
            <person name="Suyama M."/>
            <person name="Torrents D."/>
            <person name="Waterston R.H."/>
            <person name="Wilson R.K."/>
        </authorList>
    </citation>
    <scope>NUCLEOTIDE SEQUENCE [LARGE SCALE GENOMIC DNA]</scope>
</reference>
<reference key="6">
    <citation type="submission" date="2005-09" db="EMBL/GenBank/DDBJ databases">
        <authorList>
            <person name="Mural R.J."/>
            <person name="Istrail S."/>
            <person name="Sutton G.G."/>
            <person name="Florea L."/>
            <person name="Halpern A.L."/>
            <person name="Mobarry C.M."/>
            <person name="Lippert R."/>
            <person name="Walenz B."/>
            <person name="Shatkay H."/>
            <person name="Dew I."/>
            <person name="Miller J.R."/>
            <person name="Flanigan M.J."/>
            <person name="Edwards N.J."/>
            <person name="Bolanos R."/>
            <person name="Fasulo D."/>
            <person name="Halldorsson B.V."/>
            <person name="Hannenhalli S."/>
            <person name="Turner R."/>
            <person name="Yooseph S."/>
            <person name="Lu F."/>
            <person name="Nusskern D.R."/>
            <person name="Shue B.C."/>
            <person name="Zheng X.H."/>
            <person name="Zhong F."/>
            <person name="Delcher A.L."/>
            <person name="Huson D.H."/>
            <person name="Kravitz S.A."/>
            <person name="Mouchard L."/>
            <person name="Reinert K."/>
            <person name="Remington K.A."/>
            <person name="Clark A.G."/>
            <person name="Waterman M.S."/>
            <person name="Eichler E.E."/>
            <person name="Adams M.D."/>
            <person name="Hunkapiller M.W."/>
            <person name="Myers E.W."/>
            <person name="Venter J.C."/>
        </authorList>
    </citation>
    <scope>NUCLEOTIDE SEQUENCE [LARGE SCALE GENOMIC DNA]</scope>
</reference>
<reference key="7">
    <citation type="journal article" date="2004" name="Genome Res.">
        <title>The status, quality, and expansion of the NIH full-length cDNA project: the Mammalian Gene Collection (MGC).</title>
        <authorList>
            <consortium name="The MGC Project Team"/>
        </authorList>
    </citation>
    <scope>NUCLEOTIDE SEQUENCE [LARGE SCALE MRNA] (ISOFORM 1)</scope>
    <scope>NUCLEOTIDE SEQUENCE [LARGE SCALE MRNA] OF 1-717 (ISOFORM 2)</scope>
    <scope>VARIANTS GLY-464 AND THR-691</scope>
    <source>
        <tissue>Ovary</tissue>
    </source>
</reference>
<reference key="8">
    <citation type="journal article" date="2004" name="Mol. Cell. Biol.">
        <title>Coordination of DNA damage responses via the Smc5/Smc6 complex.</title>
        <authorList>
            <person name="Harvey S.H."/>
            <person name="Sheedy D.M."/>
            <person name="Cuddihy A.R."/>
            <person name="O'Connell M.J."/>
        </authorList>
    </citation>
    <scope>INTERACTION WITH NSMCE1</scope>
</reference>
<reference key="9">
    <citation type="journal article" date="2005" name="Mol. Cell. Biol.">
        <title>Human MMS21/NSE2 is a SUMO ligase required for DNA repair.</title>
        <authorList>
            <person name="Potts P.R."/>
            <person name="Yu H."/>
        </authorList>
    </citation>
    <scope>INTERACTION WITH NSMCE2</scope>
    <scope>SUMOYLATION</scope>
</reference>
<reference key="10">
    <citation type="journal article" date="2006" name="EMBO J.">
        <title>Human SMC5/6 complex promotes sister chromatid homologous recombination by recruiting the SMC1/3 cohesin complex to double-strand breaks.</title>
        <authorList>
            <person name="Potts P.R."/>
            <person name="Porteus M.H."/>
            <person name="Yu H."/>
        </authorList>
    </citation>
    <scope>FUNCTION</scope>
</reference>
<reference key="11">
    <citation type="journal article" date="2007" name="Nat. Struct. Mol. Biol.">
        <title>The SMC5/6 complex maintains telomere length in ALT cancer cells through SUMOylation of telomere-binding proteins.</title>
        <authorList>
            <person name="Potts P.R."/>
            <person name="Yu H."/>
        </authorList>
    </citation>
    <scope>FUNCTION</scope>
    <scope>SUBCELLULAR LOCATION</scope>
</reference>
<reference key="12">
    <citation type="journal article" date="2008" name="Mol. Cell. Biol.">
        <title>Identification of the proteins, including MAGEG1, that make up the human SMC5-6 protein complex.</title>
        <authorList>
            <person name="Taylor E.M."/>
            <person name="Copsey A.C."/>
            <person name="Hudson J.J."/>
            <person name="Vidot S."/>
            <person name="Lehmann A.R."/>
        </authorList>
    </citation>
    <scope>INTERACTION WITH NSMCE1; NSMCE2; EID3; NSMCE4A AND NSMCE3</scope>
    <scope>IDENTIFICATION IN THE SMC5-SMC6 COMPLEX</scope>
    <scope>SUMOYLATION</scope>
    <scope>UBIQUITINATION</scope>
</reference>
<reference key="13">
    <citation type="journal article" date="2009" name="Sci. Signal.">
        <title>Quantitative phosphoproteomic analysis of T cell receptor signaling reveals system-wide modulation of protein-protein interactions.</title>
        <authorList>
            <person name="Mayya V."/>
            <person name="Lundgren D.H."/>
            <person name="Hwang S.-I."/>
            <person name="Rezaul K."/>
            <person name="Wu L."/>
            <person name="Eng J.K."/>
            <person name="Rodionov V."/>
            <person name="Han D.K."/>
        </authorList>
    </citation>
    <scope>PHOSPHORYLATION [LARGE SCALE ANALYSIS] AT SER-669</scope>
    <scope>IDENTIFICATION BY MASS SPECTROMETRY [LARGE SCALE ANALYSIS]</scope>
    <source>
        <tissue>Leukemic T-cell</tissue>
    </source>
</reference>
<reference key="14">
    <citation type="journal article" date="2011" name="BMC Syst. Biol.">
        <title>Initial characterization of the human central proteome.</title>
        <authorList>
            <person name="Burkard T.R."/>
            <person name="Planyavsky M."/>
            <person name="Kaupe I."/>
            <person name="Breitwieser F.P."/>
            <person name="Buerckstuemmer T."/>
            <person name="Bennett K.L."/>
            <person name="Superti-Furga G."/>
            <person name="Colinge J."/>
        </authorList>
    </citation>
    <scope>IDENTIFICATION BY MASS SPECTROMETRY [LARGE SCALE ANALYSIS]</scope>
</reference>
<reference key="15">
    <citation type="journal article" date="2013" name="J. Proteome Res.">
        <title>Toward a comprehensive characterization of a human cancer cell phosphoproteome.</title>
        <authorList>
            <person name="Zhou H."/>
            <person name="Di Palma S."/>
            <person name="Preisinger C."/>
            <person name="Peng M."/>
            <person name="Polat A.N."/>
            <person name="Heck A.J."/>
            <person name="Mohammed S."/>
        </authorList>
    </citation>
    <scope>PHOSPHORYLATION [LARGE SCALE ANALYSIS] AT SER-669</scope>
    <scope>IDENTIFICATION BY MASS SPECTROMETRY [LARGE SCALE ANALYSIS]</scope>
    <source>
        <tissue>Erythroleukemia</tissue>
    </source>
</reference>
<reference key="16">
    <citation type="journal article" date="2017" name="Nat. Struct. Mol. Biol.">
        <title>Site-specific mapping of the human SUMO proteome reveals co-modification with phosphorylation.</title>
        <authorList>
            <person name="Hendriks I.A."/>
            <person name="Lyon D."/>
            <person name="Young C."/>
            <person name="Jensen L.J."/>
            <person name="Vertegaal A.C."/>
            <person name="Nielsen M.L."/>
        </authorList>
    </citation>
    <scope>SUMOYLATION [LARGE SCALE ANALYSIS] AT LYS-268 AND LYS-773</scope>
    <scope>IDENTIFICATION BY MASS SPECTROMETRY [LARGE SCALE ANALYSIS]</scope>
</reference>
<reference key="17">
    <citation type="journal article" date="2015" name="Science">
        <title>DNA repair. Proteomics reveals dynamic assembly of repair complexes during bypass of DNA cross-links.</title>
        <authorList>
            <person name="Raeschle M."/>
            <person name="Smeenk G."/>
            <person name="Hansen R.K."/>
            <person name="Temu T."/>
            <person name="Oka Y."/>
            <person name="Hein M.Y."/>
            <person name="Nagaraj N."/>
            <person name="Long D.T."/>
            <person name="Walter J.C."/>
            <person name="Hofmann K."/>
            <person name="Storchova Z."/>
            <person name="Cox J."/>
            <person name="Bekker-Jensen S."/>
            <person name="Mailand N."/>
            <person name="Mann M."/>
        </authorList>
    </citation>
    <scope>INTERACTION WITH RAD18; SLF1 AND SLF2</scope>
    <scope>SUBCELLULAR LOCATION</scope>
    <scope>IDENTIFICATION BY MASS SPECTROMETRY</scope>
</reference>
<reference key="18">
    <citation type="journal article" date="2016" name="Nature">
        <title>Hepatitis B virus X protein identifies the Smc5/6 complex as a host restriction factor.</title>
        <authorList>
            <person name="Decorsiere A."/>
            <person name="Mueller H."/>
            <person name="van Breugel P.C."/>
            <person name="Abdul F."/>
            <person name="Gerossier L."/>
            <person name="Beran R.K."/>
            <person name="Livingston C.M."/>
            <person name="Niu C."/>
            <person name="Fletcher S.P."/>
            <person name="Hantz O."/>
            <person name="Strubin M."/>
        </authorList>
    </citation>
    <scope>FUNCTION</scope>
    <scope>INDUCTION (MICROBIAL INFECTION)</scope>
    <scope>DEGRADATION (MICROBIAL INFECTION)</scope>
</reference>
<reference key="19">
    <citation type="journal article" date="2022" name="Cell Rep.">
        <title>Epstein-Barr virus BNRF1 destabilizes SMC5/6 cohesin complexes to evade its restriction of replication compartments.</title>
        <authorList>
            <person name="Yiu S.P.T."/>
            <person name="Guo R."/>
            <person name="Zerbe C."/>
            <person name="Weekes M.P."/>
            <person name="Gewurz B.E."/>
        </authorList>
    </citation>
    <scope>SUBCELLULAR LOCATION</scope>
    <scope>INTERACTION WITH EPSTEIN-BARR VIRUS PROTEIN BNRF1 (MICROBIAL INFECTION)</scope>
</reference>
<reference key="20">
    <citation type="journal article" date="2022" name="PLoS Pathog.">
        <title>KSHV RTA antagonizes SMC5/6 complex-induced viral chromatin compaction by hijacking the ubiquitin-proteasome system.</title>
        <authorList>
            <person name="Han C."/>
            <person name="Zhang D."/>
            <person name="Gui C."/>
            <person name="Huang L."/>
            <person name="Chang S."/>
            <person name="Dong L."/>
            <person name="Bai L."/>
            <person name="Wu S."/>
            <person name="Lan K."/>
        </authorList>
    </citation>
    <scope>INTERACTION WITH HOST SMC5 AND SMC6</scope>
    <scope>SUBCELLULAR LOCATION</scope>
</reference>
<reference key="21">
    <citation type="journal article" date="2022" name="Elife">
        <title>The Nse5/6-like SIMC1-SLF2 complex localizes SMC5/6 to viral replication centers.</title>
        <authorList>
            <person name="Oravcova M."/>
            <person name="Nie M."/>
            <person name="Zilio N."/>
            <person name="Maeda S."/>
            <person name="Jami-Alahmadi Y."/>
            <person name="Lazzerini-Denchi E."/>
            <person name="Wohlschlegel J.A."/>
            <person name="Ulrich H.D."/>
            <person name="Otomo T."/>
            <person name="Boddy M.N."/>
        </authorList>
    </citation>
    <scope>INTERACTION WITH SIMC1</scope>
    <scope>SUBCELLULAR LOCATION</scope>
</reference>
<reference key="22">
    <citation type="journal article" date="2006" name="Science">
        <title>The consensus coding sequences of human breast and colorectal cancers.</title>
        <authorList>
            <person name="Sjoeblom T."/>
            <person name="Jones S."/>
            <person name="Wood L.D."/>
            <person name="Parsons D.W."/>
            <person name="Lin J."/>
            <person name="Barber T.D."/>
            <person name="Mandelker D."/>
            <person name="Leary R.J."/>
            <person name="Ptak J."/>
            <person name="Silliman N."/>
            <person name="Szabo S."/>
            <person name="Buckhaults P."/>
            <person name="Farrell C."/>
            <person name="Meeh P."/>
            <person name="Markowitz S.D."/>
            <person name="Willis J."/>
            <person name="Dawson D."/>
            <person name="Willson J.K.V."/>
            <person name="Gazdar A.F."/>
            <person name="Hartigan J."/>
            <person name="Wu L."/>
            <person name="Liu C."/>
            <person name="Parmigiani G."/>
            <person name="Park B.H."/>
            <person name="Bachman K.E."/>
            <person name="Papadopoulos N."/>
            <person name="Vogelstein B."/>
            <person name="Kinzler K.W."/>
            <person name="Velculescu V.E."/>
        </authorList>
    </citation>
    <scope>VARIANT [LARGE SCALE ANALYSIS] VAL-292</scope>
</reference>
<evidence type="ECO:0000250" key="1"/>
<evidence type="ECO:0000250" key="2">
    <source>
        <dbReference type="UniProtKB" id="Q924W5"/>
    </source>
</evidence>
<evidence type="ECO:0000255" key="3"/>
<evidence type="ECO:0000256" key="4">
    <source>
        <dbReference type="SAM" id="MobiDB-lite"/>
    </source>
</evidence>
<evidence type="ECO:0000269" key="5">
    <source>
    </source>
</evidence>
<evidence type="ECO:0000269" key="6">
    <source>
    </source>
</evidence>
<evidence type="ECO:0000269" key="7">
    <source>
    </source>
</evidence>
<evidence type="ECO:0000269" key="8">
    <source>
    </source>
</evidence>
<evidence type="ECO:0000269" key="9">
    <source>
    </source>
</evidence>
<evidence type="ECO:0000269" key="10">
    <source>
    </source>
</evidence>
<evidence type="ECO:0000269" key="11">
    <source>
    </source>
</evidence>
<evidence type="ECO:0000269" key="12">
    <source>
    </source>
</evidence>
<evidence type="ECO:0000269" key="13">
    <source>
    </source>
</evidence>
<evidence type="ECO:0000269" key="14">
    <source>
    </source>
</evidence>
<evidence type="ECO:0000269" key="15">
    <source>
    </source>
</evidence>
<evidence type="ECO:0000269" key="16">
    <source>
    </source>
</evidence>
<evidence type="ECO:0000269" key="17">
    <source>
    </source>
</evidence>
<evidence type="ECO:0000269" key="18">
    <source>
    </source>
</evidence>
<evidence type="ECO:0000303" key="19">
    <source>
    </source>
</evidence>
<evidence type="ECO:0000305" key="20"/>
<evidence type="ECO:0007744" key="21">
    <source>
    </source>
</evidence>
<evidence type="ECO:0007744" key="22">
    <source>
    </source>
</evidence>
<evidence type="ECO:0007744" key="23">
    <source>
    </source>
</evidence>
<organism>
    <name type="scientific">Homo sapiens</name>
    <name type="common">Human</name>
    <dbReference type="NCBI Taxonomy" id="9606"/>
    <lineage>
        <taxon>Eukaryota</taxon>
        <taxon>Metazoa</taxon>
        <taxon>Chordata</taxon>
        <taxon>Craniata</taxon>
        <taxon>Vertebrata</taxon>
        <taxon>Euteleostomi</taxon>
        <taxon>Mammalia</taxon>
        <taxon>Eutheria</taxon>
        <taxon>Euarchontoglires</taxon>
        <taxon>Primates</taxon>
        <taxon>Haplorrhini</taxon>
        <taxon>Catarrhini</taxon>
        <taxon>Hominidae</taxon>
        <taxon>Homo</taxon>
    </lineage>
</organism>
<gene>
    <name type="primary">SMC6</name>
    <name type="synonym">SMC6L1</name>
</gene>
<name>SMC6_HUMAN</name>
<sequence>MAKRKEENFSSPKNAKRPRQEELEDFDKDGDEDECKGTTLTAAEVGIIESIHLKNFMCHSMLGPFKFGSNVNFVVGNNGSGKSAVLTALIVGLGGRAVATNRGSSLKGFVKDGQNSADISITLRNRGDDAFKASVYGNSILIQQHISIDGSRSYKLKSATGSVVSTRKEELIAILDHFNIQVDNPVSVLTQEMSKQFLQSKNEGDKYKFFMKATQLEQMKEDYSYIMETKERTKEQIHQGEERLTELKRQCVEKEERFQSIAGLSTMKTNLESLKHEMAWAVVNEIEKQLNAIRDNIKIGEDRAARLDRKMEEQQVRLNEAEQKYKDIQDKLEKISEETNARAPECMALKADVVAKKRAYNEAEVLYNRSLNEYKALKKDDEQLCKRIEELKKSTDQSLEPERLERQKKISWLKERVKAFQNQENSVNQEIEQFQQAIEKDKEEHGKIKREELDVKHALSYNQRQLKELKDSKTDRLKRFGPNVPALLEAIDDAYRQGHFTYKPVGPLGACIHLRDPELALAIESCLKGLLQAYCCHNHADERVLQALMKRFYLPGTSRPPIIVSEFRNEIYDVRHRAAYHPDFPTVLTALEIDNAVVANSLIDMRGIETVLLIKNNSVARAVMQSQKPPKNCREAFTADGDQVFAGRYYSSENTRPKFLSRDVDSEISDLENEVENKTAQILNLQQHLSALEKDIKHNEELLKRCQLHYKELKMKIRKNISEIRELENIEEHQSVDIATLEDEAQENKSKMKMVEEHMEQQKENMEHLKSLKIEAENKYDAIKFKINQLSELADPLKDELNLADSEVDNQKRGKRHYEEKQKEHLDTLNKKKRELDMKEKELEEKMSQARQICPERIEVEKSASILDKEINRLRQKIQAEHASHGDREEIMRQYQEARETYLDLDSKVRTLKKFIKLLGEIMEHRFKTYQQFRRCLTLRCKLYFDNLLSQRAYCGKMNFDHKNETLSISVQPGEGNKAAFNDMRALSGGERSFSTVCFILSLWSIAESPFRCLDEFDVYMDMVNRRIAMDLILKMADSQRFRQFILLTPQSMSSLPSSKLIRILRMSDPERGQTTLPFRPVTQEEDDDQR</sequence>
<accession>Q96SB8</accession>
<accession>A8K8Q6</accession>
<accession>D6W518</accession>
<accession>Q05BV4</accession>
<accession>Q9H0X3</accession>
<accession>Q9H6M0</accession>
<proteinExistence type="evidence at protein level"/>
<protein>
    <recommendedName>
        <fullName>Structural maintenance of chromosomes protein 6</fullName>
        <shortName>SMC protein 6</shortName>
        <shortName>SMC-6</shortName>
        <shortName>hSMC6</shortName>
    </recommendedName>
</protein>
<feature type="chain" id="PRO_0000270956" description="Structural maintenance of chromosomes protein 6">
    <location>
        <begin position="1"/>
        <end position="1091"/>
    </location>
</feature>
<feature type="region of interest" description="Disordered" evidence="4">
    <location>
        <begin position="1"/>
        <end position="34"/>
    </location>
</feature>
<feature type="region of interest" description="Flexible hinge">
    <location>
        <begin position="452"/>
        <end position="659"/>
    </location>
</feature>
<feature type="region of interest" description="Disordered" evidence="4">
    <location>
        <begin position="806"/>
        <end position="828"/>
    </location>
</feature>
<feature type="region of interest" description="Disordered" evidence="4">
    <location>
        <begin position="1072"/>
        <end position="1091"/>
    </location>
</feature>
<feature type="coiled-coil region" evidence="3">
    <location>
        <begin position="226"/>
        <end position="451"/>
    </location>
</feature>
<feature type="coiled-coil region" evidence="3">
    <location>
        <begin position="660"/>
        <end position="914"/>
    </location>
</feature>
<feature type="compositionally biased region" description="Acidic residues" evidence="4">
    <location>
        <begin position="22"/>
        <end position="34"/>
    </location>
</feature>
<feature type="compositionally biased region" description="Basic and acidic residues" evidence="4">
    <location>
        <begin position="809"/>
        <end position="828"/>
    </location>
</feature>
<feature type="binding site" evidence="3">
    <location>
        <begin position="76"/>
        <end position="83"/>
    </location>
    <ligand>
        <name>ATP</name>
        <dbReference type="ChEBI" id="CHEBI:30616"/>
    </ligand>
</feature>
<feature type="modified residue" description="Phosphoserine" evidence="21 22">
    <location>
        <position position="669"/>
    </location>
</feature>
<feature type="cross-link" description="Glycyl lysine isopeptide (Lys-Gly) (interchain with G-Cter in SUMO2)" evidence="23">
    <location>
        <position position="268"/>
    </location>
</feature>
<feature type="cross-link" description="Glycyl lysine isopeptide (Lys-Gly) (interchain with G-Cter in SUMO2)" evidence="23">
    <location>
        <position position="773"/>
    </location>
</feature>
<feature type="splice variant" id="VSP_022253" description="In isoform 2." evidence="19">
    <original>S</original>
    <variation>SWSAVVRSRLNATSASQVQAILLFQPC</variation>
    <location>
        <position position="80"/>
    </location>
</feature>
<feature type="sequence variant" id="VAR_035875" description="In a breast cancer sample; somatic mutation." evidence="11">
    <original>A</original>
    <variation>V</variation>
    <location>
        <position position="292"/>
    </location>
</feature>
<feature type="sequence variant" id="VAR_052441" description="In dbSNP:rs35195207." evidence="5 8">
    <original>R</original>
    <variation>G</variation>
    <location>
        <position position="464"/>
    </location>
</feature>
<feature type="sequence variant" id="VAR_029826" description="In dbSNP:rs1065381." evidence="5 7 8">
    <original>A</original>
    <variation>T</variation>
    <location>
        <position position="691"/>
    </location>
</feature>
<feature type="sequence variant" id="VAR_052442" description="In dbSNP:rs35257753.">
    <original>K</original>
    <variation>Q</variation>
    <location>
        <position position="928"/>
    </location>
</feature>
<feature type="sequence variant" id="VAR_029827" description="In dbSNP:rs10221907.">
    <original>I</original>
    <variation>M</variation>
    <location>
        <position position="1046"/>
    </location>
</feature>
<feature type="sequence conflict" description="In Ref. 3; BAB15236." evidence="20" ref="3">
    <original>N</original>
    <variation>Y</variation>
    <location>
        <position position="483"/>
    </location>
</feature>
<feature type="sequence conflict" description="In Ref. 3; BAB15236." evidence="20" ref="3">
    <original>D</original>
    <variation>N</variation>
    <location>
        <position position="868"/>
    </location>
</feature>
<feature type="sequence conflict" description="In Ref. 3; BAB15236." evidence="20" ref="3">
    <original>V</original>
    <variation>A</variation>
    <location>
        <position position="1082"/>
    </location>
</feature>
<dbReference type="EMBL" id="AJ310551">
    <property type="protein sequence ID" value="CAC39248.1"/>
    <property type="molecule type" value="mRNA"/>
</dbReference>
<dbReference type="EMBL" id="AL136544">
    <property type="protein sequence ID" value="CAB66479.1"/>
    <property type="molecule type" value="mRNA"/>
</dbReference>
<dbReference type="EMBL" id="AK025769">
    <property type="protein sequence ID" value="BAB15236.1"/>
    <property type="status" value="ALT_FRAME"/>
    <property type="molecule type" value="mRNA"/>
</dbReference>
<dbReference type="EMBL" id="AK292421">
    <property type="protein sequence ID" value="BAF85110.1"/>
    <property type="molecule type" value="mRNA"/>
</dbReference>
<dbReference type="EMBL" id="AL832979">
    <property type="protein sequence ID" value="CAH56327.1"/>
    <property type="molecule type" value="mRNA"/>
</dbReference>
<dbReference type="EMBL" id="AC097377">
    <property type="protein sequence ID" value="AAX88851.1"/>
    <property type="molecule type" value="Genomic_DNA"/>
</dbReference>
<dbReference type="EMBL" id="CH471053">
    <property type="protein sequence ID" value="EAX00866.1"/>
    <property type="molecule type" value="Genomic_DNA"/>
</dbReference>
<dbReference type="EMBL" id="CH471053">
    <property type="protein sequence ID" value="EAX00867.1"/>
    <property type="molecule type" value="Genomic_DNA"/>
</dbReference>
<dbReference type="EMBL" id="CH471053">
    <property type="protein sequence ID" value="EAX00868.1"/>
    <property type="molecule type" value="Genomic_DNA"/>
</dbReference>
<dbReference type="EMBL" id="BC032675">
    <property type="protein sequence ID" value="AAH32675.1"/>
    <property type="status" value="ALT_SEQ"/>
    <property type="molecule type" value="mRNA"/>
</dbReference>
<dbReference type="EMBL" id="BC039828">
    <property type="protein sequence ID" value="AAH39828.1"/>
    <property type="molecule type" value="mRNA"/>
</dbReference>
<dbReference type="CCDS" id="CCDS1690.1">
    <molecule id="Q96SB8-1"/>
</dbReference>
<dbReference type="RefSeq" id="NP_001135758.1">
    <molecule id="Q96SB8-1"/>
    <property type="nucleotide sequence ID" value="NM_001142286.2"/>
</dbReference>
<dbReference type="RefSeq" id="NP_078900.1">
    <molecule id="Q96SB8-1"/>
    <property type="nucleotide sequence ID" value="NM_024624.6"/>
</dbReference>
<dbReference type="RefSeq" id="XP_016860404.1">
    <molecule id="Q96SB8-1"/>
    <property type="nucleotide sequence ID" value="XM_017004915.3"/>
</dbReference>
<dbReference type="SMR" id="Q96SB8"/>
<dbReference type="BioGRID" id="122802">
    <property type="interactions" value="92"/>
</dbReference>
<dbReference type="ComplexPortal" id="CPX-5992">
    <property type="entry name" value="SMC5-SMC6 SUMO ligase complex, EID3 variant"/>
</dbReference>
<dbReference type="ComplexPortal" id="CPX-6086">
    <property type="entry name" value="SMC5-SMC6 SUMO ligase complex, NSE4EA variant"/>
</dbReference>
<dbReference type="CORUM" id="Q96SB8"/>
<dbReference type="DIP" id="DIP-34562N"/>
<dbReference type="FunCoup" id="Q96SB8">
    <property type="interactions" value="2681"/>
</dbReference>
<dbReference type="IntAct" id="Q96SB8">
    <property type="interactions" value="70"/>
</dbReference>
<dbReference type="MINT" id="Q96SB8"/>
<dbReference type="STRING" id="9606.ENSP00000404092"/>
<dbReference type="CarbonylDB" id="Q96SB8"/>
<dbReference type="GlyGen" id="Q96SB8">
    <property type="glycosylation" value="3 sites, 1 N-linked glycan (1 site), 1 O-linked glycan (2 sites)"/>
</dbReference>
<dbReference type="iPTMnet" id="Q96SB8"/>
<dbReference type="PhosphoSitePlus" id="Q96SB8"/>
<dbReference type="BioMuta" id="SMC6"/>
<dbReference type="DMDM" id="122070455"/>
<dbReference type="jPOST" id="Q96SB8"/>
<dbReference type="MassIVE" id="Q96SB8"/>
<dbReference type="PaxDb" id="9606-ENSP00000404092"/>
<dbReference type="PeptideAtlas" id="Q96SB8"/>
<dbReference type="ProteomicsDB" id="78100">
    <molecule id="Q96SB8-1"/>
</dbReference>
<dbReference type="ProteomicsDB" id="78101">
    <molecule id="Q96SB8-2"/>
</dbReference>
<dbReference type="Pumba" id="Q96SB8"/>
<dbReference type="Antibodypedia" id="27034">
    <property type="antibodies" value="167 antibodies from 27 providers"/>
</dbReference>
<dbReference type="DNASU" id="79677"/>
<dbReference type="Ensembl" id="ENST00000351948.8">
    <molecule id="Q96SB8-1"/>
    <property type="protein sequence ID" value="ENSP00000323439.4"/>
    <property type="gene ID" value="ENSG00000163029.16"/>
</dbReference>
<dbReference type="Ensembl" id="ENST00000402989.5">
    <molecule id="Q96SB8-1"/>
    <property type="protein sequence ID" value="ENSP00000384539.1"/>
    <property type="gene ID" value="ENSG00000163029.16"/>
</dbReference>
<dbReference type="Ensembl" id="ENST00000448223.7">
    <molecule id="Q96SB8-1"/>
    <property type="protein sequence ID" value="ENSP00000404092.2"/>
    <property type="gene ID" value="ENSG00000163029.16"/>
</dbReference>
<dbReference type="GeneID" id="79677"/>
<dbReference type="KEGG" id="hsa:79677"/>
<dbReference type="MANE-Select" id="ENST00000448223.7">
    <property type="protein sequence ID" value="ENSP00000404092.2"/>
    <property type="RefSeq nucleotide sequence ID" value="NM_001142286.2"/>
    <property type="RefSeq protein sequence ID" value="NP_001135758.1"/>
</dbReference>
<dbReference type="UCSC" id="uc002rcn.4">
    <molecule id="Q96SB8-1"/>
    <property type="organism name" value="human"/>
</dbReference>
<dbReference type="AGR" id="HGNC:20466"/>
<dbReference type="CTD" id="79677"/>
<dbReference type="DisGeNET" id="79677"/>
<dbReference type="GeneCards" id="SMC6"/>
<dbReference type="HGNC" id="HGNC:20466">
    <property type="gene designation" value="SMC6"/>
</dbReference>
<dbReference type="HPA" id="ENSG00000163029">
    <property type="expression patterns" value="Low tissue specificity"/>
</dbReference>
<dbReference type="MIM" id="609387">
    <property type="type" value="gene"/>
</dbReference>
<dbReference type="neXtProt" id="NX_Q96SB8"/>
<dbReference type="OpenTargets" id="ENSG00000163029"/>
<dbReference type="PharmGKB" id="PA134892702"/>
<dbReference type="VEuPathDB" id="HostDB:ENSG00000163029"/>
<dbReference type="eggNOG" id="KOG0250">
    <property type="taxonomic scope" value="Eukaryota"/>
</dbReference>
<dbReference type="GeneTree" id="ENSGT00550000074816"/>
<dbReference type="HOGENOM" id="CLU_009063_0_1_1"/>
<dbReference type="InParanoid" id="Q96SB8"/>
<dbReference type="OMA" id="MCHDHFY"/>
<dbReference type="OrthoDB" id="10072614at2759"/>
<dbReference type="PAN-GO" id="Q96SB8">
    <property type="GO annotations" value="6 GO annotations based on evolutionary models"/>
</dbReference>
<dbReference type="PhylomeDB" id="Q96SB8"/>
<dbReference type="TreeFam" id="TF314520"/>
<dbReference type="PathwayCommons" id="Q96SB8"/>
<dbReference type="Reactome" id="R-HSA-3108214">
    <property type="pathway name" value="SUMOylation of DNA damage response and repair proteins"/>
</dbReference>
<dbReference type="SignaLink" id="Q96SB8"/>
<dbReference type="SIGNOR" id="Q96SB8"/>
<dbReference type="BioGRID-ORCS" id="79677">
    <property type="hits" value="611 hits in 1173 CRISPR screens"/>
</dbReference>
<dbReference type="CD-CODE" id="91857CE7">
    <property type="entry name" value="Nucleolus"/>
</dbReference>
<dbReference type="CD-CODE" id="B5B9A610">
    <property type="entry name" value="PML body"/>
</dbReference>
<dbReference type="GeneWiki" id="SMC6"/>
<dbReference type="GenomeRNAi" id="79677"/>
<dbReference type="Pharos" id="Q96SB8">
    <property type="development level" value="Tbio"/>
</dbReference>
<dbReference type="PRO" id="PR:Q96SB8"/>
<dbReference type="Proteomes" id="UP000005640">
    <property type="component" value="Chromosome 2"/>
</dbReference>
<dbReference type="RNAct" id="Q96SB8">
    <property type="molecule type" value="protein"/>
</dbReference>
<dbReference type="Bgee" id="ENSG00000163029">
    <property type="expression patterns" value="Expressed in sperm and 182 other cell types or tissues"/>
</dbReference>
<dbReference type="ExpressionAtlas" id="Q96SB8">
    <property type="expression patterns" value="baseline and differential"/>
</dbReference>
<dbReference type="GO" id="GO:0000775">
    <property type="term" value="C:chromosome, centromeric region"/>
    <property type="evidence" value="ECO:0007669"/>
    <property type="project" value="Ensembl"/>
</dbReference>
<dbReference type="GO" id="GO:0000781">
    <property type="term" value="C:chromosome, telomeric region"/>
    <property type="evidence" value="ECO:0000314"/>
    <property type="project" value="UniProtKB"/>
</dbReference>
<dbReference type="GO" id="GO:0035061">
    <property type="term" value="C:interchromatin granule"/>
    <property type="evidence" value="ECO:0000314"/>
    <property type="project" value="UniProtKB"/>
</dbReference>
<dbReference type="GO" id="GO:0097431">
    <property type="term" value="C:mitotic spindle pole"/>
    <property type="evidence" value="ECO:0007669"/>
    <property type="project" value="Ensembl"/>
</dbReference>
<dbReference type="GO" id="GO:0016607">
    <property type="term" value="C:nuclear speck"/>
    <property type="evidence" value="ECO:0007669"/>
    <property type="project" value="UniProtKB-SubCell"/>
</dbReference>
<dbReference type="GO" id="GO:0005654">
    <property type="term" value="C:nucleoplasm"/>
    <property type="evidence" value="ECO:0000314"/>
    <property type="project" value="HPA"/>
</dbReference>
<dbReference type="GO" id="GO:0005634">
    <property type="term" value="C:nucleus"/>
    <property type="evidence" value="ECO:0000314"/>
    <property type="project" value="UniProtKB"/>
</dbReference>
<dbReference type="GO" id="GO:0016605">
    <property type="term" value="C:PML body"/>
    <property type="evidence" value="ECO:0000314"/>
    <property type="project" value="UniProtKB"/>
</dbReference>
<dbReference type="GO" id="GO:0000803">
    <property type="term" value="C:sex chromosome"/>
    <property type="evidence" value="ECO:0000250"/>
    <property type="project" value="UniProtKB"/>
</dbReference>
<dbReference type="GO" id="GO:0035861">
    <property type="term" value="C:site of double-strand break"/>
    <property type="evidence" value="ECO:0000314"/>
    <property type="project" value="UniProtKB"/>
</dbReference>
<dbReference type="GO" id="GO:0030915">
    <property type="term" value="C:Smc5-Smc6 complex"/>
    <property type="evidence" value="ECO:0000314"/>
    <property type="project" value="UniProtKB"/>
</dbReference>
<dbReference type="GO" id="GO:0005524">
    <property type="term" value="F:ATP binding"/>
    <property type="evidence" value="ECO:0007669"/>
    <property type="project" value="UniProtKB-KW"/>
</dbReference>
<dbReference type="GO" id="GO:0016887">
    <property type="term" value="F:ATP hydrolysis activity"/>
    <property type="evidence" value="ECO:0007669"/>
    <property type="project" value="InterPro"/>
</dbReference>
<dbReference type="GO" id="GO:0003684">
    <property type="term" value="F:damaged DNA binding"/>
    <property type="evidence" value="ECO:0000318"/>
    <property type="project" value="GO_Central"/>
</dbReference>
<dbReference type="GO" id="GO:0000217">
    <property type="term" value="F:DNA secondary structure binding"/>
    <property type="evidence" value="ECO:0000314"/>
    <property type="project" value="UniProt"/>
</dbReference>
<dbReference type="GO" id="GO:0003697">
    <property type="term" value="F:single-stranded DNA binding"/>
    <property type="evidence" value="ECO:0000318"/>
    <property type="project" value="GO_Central"/>
</dbReference>
<dbReference type="GO" id="GO:0031625">
    <property type="term" value="F:ubiquitin protein ligase binding"/>
    <property type="evidence" value="ECO:0000353"/>
    <property type="project" value="UniProtKB"/>
</dbReference>
<dbReference type="GO" id="GO:0090398">
    <property type="term" value="P:cellular senescence"/>
    <property type="evidence" value="ECO:0000315"/>
    <property type="project" value="UniProtKB"/>
</dbReference>
<dbReference type="GO" id="GO:0140588">
    <property type="term" value="P:chromatin looping"/>
    <property type="evidence" value="ECO:0000303"/>
    <property type="project" value="ComplexPortal"/>
</dbReference>
<dbReference type="GO" id="GO:0006974">
    <property type="term" value="P:DNA damage response"/>
    <property type="evidence" value="ECO:0000314"/>
    <property type="project" value="UniProtKB"/>
</dbReference>
<dbReference type="GO" id="GO:0000724">
    <property type="term" value="P:double-strand break repair via homologous recombination"/>
    <property type="evidence" value="ECO:0000318"/>
    <property type="project" value="GO_Central"/>
</dbReference>
<dbReference type="GO" id="GO:0044828">
    <property type="term" value="P:negative regulation by host of viral genome replication"/>
    <property type="evidence" value="ECO:0000314"/>
    <property type="project" value="UniProt"/>
</dbReference>
<dbReference type="GO" id="GO:0051984">
    <property type="term" value="P:positive regulation of chromosome segregation"/>
    <property type="evidence" value="ECO:0000315"/>
    <property type="project" value="UniProtKB"/>
</dbReference>
<dbReference type="GO" id="GO:0016925">
    <property type="term" value="P:protein sumoylation"/>
    <property type="evidence" value="ECO:0000303"/>
    <property type="project" value="ComplexPortal"/>
</dbReference>
<dbReference type="GO" id="GO:0032204">
    <property type="term" value="P:regulation of telomere maintenance"/>
    <property type="evidence" value="ECO:0000303"/>
    <property type="project" value="ComplexPortal"/>
</dbReference>
<dbReference type="GO" id="GO:0000722">
    <property type="term" value="P:telomere maintenance via recombination"/>
    <property type="evidence" value="ECO:0000315"/>
    <property type="project" value="UniProtKB"/>
</dbReference>
<dbReference type="FunFam" id="3.40.50.300:FF:001138">
    <property type="entry name" value="Structural maintenance of chromosomes protein 6"/>
    <property type="match status" value="1"/>
</dbReference>
<dbReference type="FunFam" id="3.40.50.300:FF:000959">
    <property type="entry name" value="structural maintenance of chromosomes protein 6"/>
    <property type="match status" value="1"/>
</dbReference>
<dbReference type="Gene3D" id="3.40.50.300">
    <property type="entry name" value="P-loop containing nucleotide triphosphate hydrolases"/>
    <property type="match status" value="2"/>
</dbReference>
<dbReference type="InterPro" id="IPR027417">
    <property type="entry name" value="P-loop_NTPase"/>
</dbReference>
<dbReference type="InterPro" id="IPR038729">
    <property type="entry name" value="Rad50/SbcC_AAA"/>
</dbReference>
<dbReference type="PANTHER" id="PTHR19306">
    <property type="entry name" value="STRUCTURAL MAINTENANCE OF CHROMOSOMES 5,6 SMC5, SMC6"/>
    <property type="match status" value="1"/>
</dbReference>
<dbReference type="PANTHER" id="PTHR19306:SF6">
    <property type="entry name" value="STRUCTURAL MAINTENANCE OF CHROMOSOMES PROTEIN 6"/>
    <property type="match status" value="1"/>
</dbReference>
<dbReference type="Pfam" id="PF13476">
    <property type="entry name" value="AAA_23"/>
    <property type="match status" value="1"/>
</dbReference>
<dbReference type="SUPFAM" id="SSF52540">
    <property type="entry name" value="P-loop containing nucleoside triphosphate hydrolases"/>
    <property type="match status" value="2"/>
</dbReference>